<sequence>MDKFQIHGNGPLKGEIRVSGAKNAALPILCAGLLTADTVSLDNVPNLQDVRTTLKLLRQMGMQAELDGARVTLNGADVNVLEAPYELVKTMRASILVLGPLVARFGEARVSLPGGCGIGARPVDQHIKGLQAMGAEITIEHGFIHARAKRLKGARVVTDMITVTGTENLLMAATLAEGETVLENAAREPEVTDLAQLLVKMGAKIEGIGTDRLVVQGVERLHGASHSVIADRIEAGTFLCAAAATLGDLVLRGVQPDILDTVLDKLREAGAKLETGADWIRLAMPQRAKAVSFRTSEYPAFPTDMQAQFMALNAVAEGTARVTETIFENRFMHVQELNRLGADIAVEGNTAVVNGVPRLSGANVMATDLRASASLVIAGLVADGETVIDRIYHLDRGYDRMEDKLSAVGAKIRRIA</sequence>
<evidence type="ECO:0000255" key="1">
    <source>
        <dbReference type="HAMAP-Rule" id="MF_00111"/>
    </source>
</evidence>
<feature type="chain" id="PRO_1000023079" description="UDP-N-acetylglucosamine 1-carboxyvinyltransferase">
    <location>
        <begin position="1"/>
        <end position="416"/>
    </location>
</feature>
<feature type="active site" description="Proton donor" evidence="1">
    <location>
        <position position="116"/>
    </location>
</feature>
<feature type="binding site" evidence="1">
    <location>
        <begin position="22"/>
        <end position="23"/>
    </location>
    <ligand>
        <name>phosphoenolpyruvate</name>
        <dbReference type="ChEBI" id="CHEBI:58702"/>
    </ligand>
</feature>
<feature type="binding site" evidence="1">
    <location>
        <position position="92"/>
    </location>
    <ligand>
        <name>UDP-N-acetyl-alpha-D-glucosamine</name>
        <dbReference type="ChEBI" id="CHEBI:57705"/>
    </ligand>
</feature>
<feature type="binding site" evidence="1">
    <location>
        <begin position="121"/>
        <end position="125"/>
    </location>
    <ligand>
        <name>UDP-N-acetyl-alpha-D-glucosamine</name>
        <dbReference type="ChEBI" id="CHEBI:57705"/>
    </ligand>
</feature>
<feature type="binding site" evidence="1">
    <location>
        <position position="304"/>
    </location>
    <ligand>
        <name>UDP-N-acetyl-alpha-D-glucosamine</name>
        <dbReference type="ChEBI" id="CHEBI:57705"/>
    </ligand>
</feature>
<feature type="binding site" evidence="1">
    <location>
        <position position="326"/>
    </location>
    <ligand>
        <name>UDP-N-acetyl-alpha-D-glucosamine</name>
        <dbReference type="ChEBI" id="CHEBI:57705"/>
    </ligand>
</feature>
<feature type="modified residue" description="2-(S-cysteinyl)pyruvic acid O-phosphothioketal" evidence="1">
    <location>
        <position position="116"/>
    </location>
</feature>
<accession>Q0K685</accession>
<protein>
    <recommendedName>
        <fullName evidence="1">UDP-N-acetylglucosamine 1-carboxyvinyltransferase</fullName>
        <ecNumber evidence="1">2.5.1.7</ecNumber>
    </recommendedName>
    <alternativeName>
        <fullName evidence="1">Enoylpyruvate transferase</fullName>
    </alternativeName>
    <alternativeName>
        <fullName evidence="1">UDP-N-acetylglucosamine enolpyruvyl transferase</fullName>
        <shortName evidence="1">EPT</shortName>
    </alternativeName>
</protein>
<reference key="1">
    <citation type="journal article" date="2006" name="Nat. Biotechnol.">
        <title>Genome sequence of the bioplastic-producing 'Knallgas' bacterium Ralstonia eutropha H16.</title>
        <authorList>
            <person name="Pohlmann A."/>
            <person name="Fricke W.F."/>
            <person name="Reinecke F."/>
            <person name="Kusian B."/>
            <person name="Liesegang H."/>
            <person name="Cramm R."/>
            <person name="Eitinger T."/>
            <person name="Ewering C."/>
            <person name="Poetter M."/>
            <person name="Schwartz E."/>
            <person name="Strittmatter A."/>
            <person name="Voss I."/>
            <person name="Gottschalk G."/>
            <person name="Steinbuechel A."/>
            <person name="Friedrich B."/>
            <person name="Bowien B."/>
        </authorList>
    </citation>
    <scope>NUCLEOTIDE SEQUENCE [LARGE SCALE GENOMIC DNA]</scope>
    <source>
        <strain>ATCC 17699 / DSM 428 / KCTC 22496 / NCIMB 10442 / H16 / Stanier 337</strain>
    </source>
</reference>
<dbReference type="EC" id="2.5.1.7" evidence="1"/>
<dbReference type="EMBL" id="AM260479">
    <property type="protein sequence ID" value="CAJ94486.1"/>
    <property type="molecule type" value="Genomic_DNA"/>
</dbReference>
<dbReference type="RefSeq" id="WP_011616142.1">
    <property type="nucleotide sequence ID" value="NC_008313.1"/>
</dbReference>
<dbReference type="SMR" id="Q0K685"/>
<dbReference type="STRING" id="381666.H16_A3418"/>
<dbReference type="KEGG" id="reh:H16_A3418"/>
<dbReference type="PATRIC" id="fig|381666.6.peg.3811"/>
<dbReference type="eggNOG" id="COG0766">
    <property type="taxonomic scope" value="Bacteria"/>
</dbReference>
<dbReference type="HOGENOM" id="CLU_027387_0_0_4"/>
<dbReference type="OrthoDB" id="9803760at2"/>
<dbReference type="UniPathway" id="UPA00219"/>
<dbReference type="Proteomes" id="UP000008210">
    <property type="component" value="Chromosome 1"/>
</dbReference>
<dbReference type="GO" id="GO:0005737">
    <property type="term" value="C:cytoplasm"/>
    <property type="evidence" value="ECO:0007669"/>
    <property type="project" value="UniProtKB-SubCell"/>
</dbReference>
<dbReference type="GO" id="GO:0008760">
    <property type="term" value="F:UDP-N-acetylglucosamine 1-carboxyvinyltransferase activity"/>
    <property type="evidence" value="ECO:0007669"/>
    <property type="project" value="UniProtKB-UniRule"/>
</dbReference>
<dbReference type="GO" id="GO:0051301">
    <property type="term" value="P:cell division"/>
    <property type="evidence" value="ECO:0007669"/>
    <property type="project" value="UniProtKB-KW"/>
</dbReference>
<dbReference type="GO" id="GO:0071555">
    <property type="term" value="P:cell wall organization"/>
    <property type="evidence" value="ECO:0007669"/>
    <property type="project" value="UniProtKB-KW"/>
</dbReference>
<dbReference type="GO" id="GO:0009252">
    <property type="term" value="P:peptidoglycan biosynthetic process"/>
    <property type="evidence" value="ECO:0007669"/>
    <property type="project" value="UniProtKB-UniRule"/>
</dbReference>
<dbReference type="GO" id="GO:0008360">
    <property type="term" value="P:regulation of cell shape"/>
    <property type="evidence" value="ECO:0007669"/>
    <property type="project" value="UniProtKB-KW"/>
</dbReference>
<dbReference type="GO" id="GO:0019277">
    <property type="term" value="P:UDP-N-acetylgalactosamine biosynthetic process"/>
    <property type="evidence" value="ECO:0007669"/>
    <property type="project" value="InterPro"/>
</dbReference>
<dbReference type="CDD" id="cd01555">
    <property type="entry name" value="UdpNAET"/>
    <property type="match status" value="1"/>
</dbReference>
<dbReference type="FunFam" id="3.65.10.10:FF:000002">
    <property type="entry name" value="UDP-N-acetylglucosamine 1-carboxyvinyltransferase"/>
    <property type="match status" value="1"/>
</dbReference>
<dbReference type="Gene3D" id="3.65.10.10">
    <property type="entry name" value="Enolpyruvate transferase domain"/>
    <property type="match status" value="2"/>
</dbReference>
<dbReference type="HAMAP" id="MF_00111">
    <property type="entry name" value="MurA"/>
    <property type="match status" value="1"/>
</dbReference>
<dbReference type="InterPro" id="IPR001986">
    <property type="entry name" value="Enolpyruvate_Tfrase_dom"/>
</dbReference>
<dbReference type="InterPro" id="IPR036968">
    <property type="entry name" value="Enolpyruvate_Tfrase_sf"/>
</dbReference>
<dbReference type="InterPro" id="IPR050068">
    <property type="entry name" value="MurA_subfamily"/>
</dbReference>
<dbReference type="InterPro" id="IPR013792">
    <property type="entry name" value="RNA3'P_cycl/enolpyr_Trfase_a/b"/>
</dbReference>
<dbReference type="InterPro" id="IPR005750">
    <property type="entry name" value="UDP_GlcNAc_COvinyl_MurA"/>
</dbReference>
<dbReference type="NCBIfam" id="TIGR01072">
    <property type="entry name" value="murA"/>
    <property type="match status" value="1"/>
</dbReference>
<dbReference type="NCBIfam" id="NF006873">
    <property type="entry name" value="PRK09369.1"/>
    <property type="match status" value="1"/>
</dbReference>
<dbReference type="PANTHER" id="PTHR43783">
    <property type="entry name" value="UDP-N-ACETYLGLUCOSAMINE 1-CARBOXYVINYLTRANSFERASE"/>
    <property type="match status" value="1"/>
</dbReference>
<dbReference type="PANTHER" id="PTHR43783:SF1">
    <property type="entry name" value="UDP-N-ACETYLGLUCOSAMINE 1-CARBOXYVINYLTRANSFERASE"/>
    <property type="match status" value="1"/>
</dbReference>
<dbReference type="Pfam" id="PF00275">
    <property type="entry name" value="EPSP_synthase"/>
    <property type="match status" value="1"/>
</dbReference>
<dbReference type="SUPFAM" id="SSF55205">
    <property type="entry name" value="EPT/RTPC-like"/>
    <property type="match status" value="1"/>
</dbReference>
<keyword id="KW-0131">Cell cycle</keyword>
<keyword id="KW-0132">Cell division</keyword>
<keyword id="KW-0133">Cell shape</keyword>
<keyword id="KW-0961">Cell wall biogenesis/degradation</keyword>
<keyword id="KW-0963">Cytoplasm</keyword>
<keyword id="KW-0573">Peptidoglycan synthesis</keyword>
<keyword id="KW-0670">Pyruvate</keyword>
<keyword id="KW-1185">Reference proteome</keyword>
<keyword id="KW-0808">Transferase</keyword>
<gene>
    <name evidence="1" type="primary">murA</name>
    <name type="ordered locus">H16_A3418</name>
</gene>
<comment type="function">
    <text evidence="1">Cell wall formation. Adds enolpyruvyl to UDP-N-acetylglucosamine.</text>
</comment>
<comment type="catalytic activity">
    <reaction evidence="1">
        <text>phosphoenolpyruvate + UDP-N-acetyl-alpha-D-glucosamine = UDP-N-acetyl-3-O-(1-carboxyvinyl)-alpha-D-glucosamine + phosphate</text>
        <dbReference type="Rhea" id="RHEA:18681"/>
        <dbReference type="ChEBI" id="CHEBI:43474"/>
        <dbReference type="ChEBI" id="CHEBI:57705"/>
        <dbReference type="ChEBI" id="CHEBI:58702"/>
        <dbReference type="ChEBI" id="CHEBI:68483"/>
        <dbReference type="EC" id="2.5.1.7"/>
    </reaction>
</comment>
<comment type="pathway">
    <text evidence="1">Cell wall biogenesis; peptidoglycan biosynthesis.</text>
</comment>
<comment type="subcellular location">
    <subcellularLocation>
        <location evidence="1">Cytoplasm</location>
    </subcellularLocation>
</comment>
<comment type="similarity">
    <text evidence="1">Belongs to the EPSP synthase family. MurA subfamily.</text>
</comment>
<proteinExistence type="inferred from homology"/>
<name>MURA_CUPNH</name>
<organism>
    <name type="scientific">Cupriavidus necator (strain ATCC 17699 / DSM 428 / KCTC 22496 / NCIMB 10442 / H16 / Stanier 337)</name>
    <name type="common">Ralstonia eutropha</name>
    <dbReference type="NCBI Taxonomy" id="381666"/>
    <lineage>
        <taxon>Bacteria</taxon>
        <taxon>Pseudomonadati</taxon>
        <taxon>Pseudomonadota</taxon>
        <taxon>Betaproteobacteria</taxon>
        <taxon>Burkholderiales</taxon>
        <taxon>Burkholderiaceae</taxon>
        <taxon>Cupriavidus</taxon>
    </lineage>
</organism>